<organism>
    <name type="scientific">Lactococcus lactis subsp. lactis (strain IL1403)</name>
    <name type="common">Streptococcus lactis</name>
    <dbReference type="NCBI Taxonomy" id="272623"/>
    <lineage>
        <taxon>Bacteria</taxon>
        <taxon>Bacillati</taxon>
        <taxon>Bacillota</taxon>
        <taxon>Bacilli</taxon>
        <taxon>Lactobacillales</taxon>
        <taxon>Streptococcaceae</taxon>
        <taxon>Lactococcus</taxon>
    </lineage>
</organism>
<protein>
    <recommendedName>
        <fullName>Uncharacterized RNA methyltransferase YwfF</fullName>
        <ecNumber>2.1.1.-</ecNumber>
    </recommendedName>
</protein>
<comment type="similarity">
    <text evidence="2">Belongs to the class I-like SAM-binding methyltransferase superfamily. RNA M5U methyltransferase family.</text>
</comment>
<sequence length="513" mass="58919">MINLKIGQKLQLEIERMGINGEGIGVISGRLVFIPYALPGEEVLVEITENARNFSRAKLVKIIEKSPNRVKPQDRAYHEMSQSHIMHLSYPMQLEFKRDVMRQALEKYKPAGWRNYELRATLGMENTLGYRNKLQFQVRRLNDGTVIAGLYQEGTHHLVNLDNCLVQDPKTQEIINHICRLIEKFDLPVYDERKIGGIRTVMVRRSQKTGEVQIIFVTSTPIILDGQVWPELREEPSKRQKNSFVKFDKMLSALTEEFEEIVTVAVNFHPRKTSEIYGERTQILFNEKETITEGVLDYEFELSPRAFYQLNSEQANVLYGEAVKALNPKKDDRVIDAYCGVGTIGFAVAKKVKSVHGMDITPESIFDARENAKRLGLKNCHYEIGKAERIIPNWNKSGHRATAMIVDPPRTGLDDALLETITKFPPEKMVYVSCNVSTLAKDLVVLANFYKVEYIQSVDMFPHTARTEAVVKLTKRDEPLKIVKFEHLEEERKAEAFAKGKKRGRRPQKYGKY</sequence>
<evidence type="ECO:0000255" key="1">
    <source>
        <dbReference type="PROSITE-ProRule" id="PRU00208"/>
    </source>
</evidence>
<evidence type="ECO:0000255" key="2">
    <source>
        <dbReference type="PROSITE-ProRule" id="PRU01024"/>
    </source>
</evidence>
<name>YWFF_LACLA</name>
<gene>
    <name type="primary">ywfF</name>
    <name type="ordered locus">LL2179</name>
    <name type="ORF">L37880</name>
</gene>
<proteinExistence type="inferred from homology"/>
<reference key="1">
    <citation type="journal article" date="2001" name="Genome Res.">
        <title>The complete genome sequence of the lactic acid bacterium Lactococcus lactis ssp. lactis IL1403.</title>
        <authorList>
            <person name="Bolotin A."/>
            <person name="Wincker P."/>
            <person name="Mauger S."/>
            <person name="Jaillon O."/>
            <person name="Malarme K."/>
            <person name="Weissenbach J."/>
            <person name="Ehrlich S.D."/>
            <person name="Sorokin A."/>
        </authorList>
    </citation>
    <scope>NUCLEOTIDE SEQUENCE [LARGE SCALE GENOMIC DNA]</scope>
    <source>
        <strain>IL1403</strain>
    </source>
</reference>
<dbReference type="EC" id="2.1.1.-"/>
<dbReference type="EMBL" id="AE005176">
    <property type="protein sequence ID" value="AAK06277.1"/>
    <property type="molecule type" value="Genomic_DNA"/>
</dbReference>
<dbReference type="PIR" id="C86897">
    <property type="entry name" value="C86897"/>
</dbReference>
<dbReference type="RefSeq" id="NP_268336.1">
    <property type="nucleotide sequence ID" value="NC_002662.1"/>
</dbReference>
<dbReference type="SMR" id="Q9CDP0"/>
<dbReference type="PaxDb" id="272623-L37880"/>
<dbReference type="EnsemblBacteria" id="AAK06277">
    <property type="protein sequence ID" value="AAK06277"/>
    <property type="gene ID" value="L37880"/>
</dbReference>
<dbReference type="KEGG" id="lla:L37880"/>
<dbReference type="PATRIC" id="fig|272623.7.peg.2339"/>
<dbReference type="eggNOG" id="COG2265">
    <property type="taxonomic scope" value="Bacteria"/>
</dbReference>
<dbReference type="HOGENOM" id="CLU_014689_7_1_9"/>
<dbReference type="OrthoDB" id="9804590at2"/>
<dbReference type="Proteomes" id="UP000002196">
    <property type="component" value="Chromosome"/>
</dbReference>
<dbReference type="GO" id="GO:0070041">
    <property type="term" value="F:rRNA (uridine-C5-)-methyltransferase activity"/>
    <property type="evidence" value="ECO:0007669"/>
    <property type="project" value="TreeGrafter"/>
</dbReference>
<dbReference type="GO" id="GO:0070475">
    <property type="term" value="P:rRNA base methylation"/>
    <property type="evidence" value="ECO:0007669"/>
    <property type="project" value="TreeGrafter"/>
</dbReference>
<dbReference type="CDD" id="cd02440">
    <property type="entry name" value="AdoMet_MTases"/>
    <property type="match status" value="1"/>
</dbReference>
<dbReference type="FunFam" id="3.40.50.150:FF:000009">
    <property type="entry name" value="23S rRNA (Uracil(1939)-C(5))-methyltransferase RlmD"/>
    <property type="match status" value="1"/>
</dbReference>
<dbReference type="FunFam" id="2.40.50.140:FF:000097">
    <property type="entry name" value="23S rRNA (uracil(1939)-C(5))-methyltransferase RlmD"/>
    <property type="match status" value="1"/>
</dbReference>
<dbReference type="FunFam" id="2.40.50.1070:FF:000003">
    <property type="entry name" value="23S rRNA (Uracil-5-)-methyltransferase RumA"/>
    <property type="match status" value="1"/>
</dbReference>
<dbReference type="Gene3D" id="2.40.50.1070">
    <property type="match status" value="1"/>
</dbReference>
<dbReference type="Gene3D" id="2.40.50.140">
    <property type="entry name" value="Nucleic acid-binding proteins"/>
    <property type="match status" value="1"/>
</dbReference>
<dbReference type="Gene3D" id="3.40.50.150">
    <property type="entry name" value="Vaccinia Virus protein VP39"/>
    <property type="match status" value="1"/>
</dbReference>
<dbReference type="InterPro" id="IPR030390">
    <property type="entry name" value="MeTrfase_TrmA_AS"/>
</dbReference>
<dbReference type="InterPro" id="IPR030391">
    <property type="entry name" value="MeTrfase_TrmA_CS"/>
</dbReference>
<dbReference type="InterPro" id="IPR012340">
    <property type="entry name" value="NA-bd_OB-fold"/>
</dbReference>
<dbReference type="InterPro" id="IPR029063">
    <property type="entry name" value="SAM-dependent_MTases_sf"/>
</dbReference>
<dbReference type="InterPro" id="IPR002792">
    <property type="entry name" value="TRAM_dom"/>
</dbReference>
<dbReference type="InterPro" id="IPR010280">
    <property type="entry name" value="U5_MeTrfase_fam"/>
</dbReference>
<dbReference type="NCBIfam" id="TIGR00479">
    <property type="entry name" value="rumA"/>
    <property type="match status" value="1"/>
</dbReference>
<dbReference type="PANTHER" id="PTHR11061:SF45">
    <property type="match status" value="1"/>
</dbReference>
<dbReference type="PANTHER" id="PTHR11061">
    <property type="entry name" value="RNA M5U METHYLTRANSFERASE"/>
    <property type="match status" value="1"/>
</dbReference>
<dbReference type="Pfam" id="PF01938">
    <property type="entry name" value="TRAM"/>
    <property type="match status" value="1"/>
</dbReference>
<dbReference type="Pfam" id="PF05958">
    <property type="entry name" value="tRNA_U5-meth_tr"/>
    <property type="match status" value="1"/>
</dbReference>
<dbReference type="SUPFAM" id="SSF50249">
    <property type="entry name" value="Nucleic acid-binding proteins"/>
    <property type="match status" value="1"/>
</dbReference>
<dbReference type="SUPFAM" id="SSF53335">
    <property type="entry name" value="S-adenosyl-L-methionine-dependent methyltransferases"/>
    <property type="match status" value="1"/>
</dbReference>
<dbReference type="PROSITE" id="PS51687">
    <property type="entry name" value="SAM_MT_RNA_M5U"/>
    <property type="match status" value="1"/>
</dbReference>
<dbReference type="PROSITE" id="PS50926">
    <property type="entry name" value="TRAM"/>
    <property type="match status" value="1"/>
</dbReference>
<dbReference type="PROSITE" id="PS01230">
    <property type="entry name" value="TRMA_1"/>
    <property type="match status" value="1"/>
</dbReference>
<dbReference type="PROSITE" id="PS01231">
    <property type="entry name" value="TRMA_2"/>
    <property type="match status" value="1"/>
</dbReference>
<feature type="chain" id="PRO_0000161988" description="Uncharacterized RNA methyltransferase YwfF">
    <location>
        <begin position="1"/>
        <end position="513"/>
    </location>
</feature>
<feature type="domain" description="TRAM" evidence="1">
    <location>
        <begin position="3"/>
        <end position="61"/>
    </location>
</feature>
<feature type="active site" description="Nucleophile" evidence="2">
    <location>
        <position position="434"/>
    </location>
</feature>
<feature type="binding site" evidence="2">
    <location>
        <position position="309"/>
    </location>
    <ligand>
        <name>S-adenosyl-L-methionine</name>
        <dbReference type="ChEBI" id="CHEBI:59789"/>
    </ligand>
</feature>
<feature type="binding site" evidence="2">
    <location>
        <position position="338"/>
    </location>
    <ligand>
        <name>S-adenosyl-L-methionine</name>
        <dbReference type="ChEBI" id="CHEBI:59789"/>
    </ligand>
</feature>
<feature type="binding site" evidence="2">
    <location>
        <position position="359"/>
    </location>
    <ligand>
        <name>S-adenosyl-L-methionine</name>
        <dbReference type="ChEBI" id="CHEBI:59789"/>
    </ligand>
</feature>
<feature type="binding site" evidence="2">
    <location>
        <position position="407"/>
    </location>
    <ligand>
        <name>S-adenosyl-L-methionine</name>
        <dbReference type="ChEBI" id="CHEBI:59789"/>
    </ligand>
</feature>
<keyword id="KW-0489">Methyltransferase</keyword>
<keyword id="KW-1185">Reference proteome</keyword>
<keyword id="KW-0949">S-adenosyl-L-methionine</keyword>
<keyword id="KW-0808">Transferase</keyword>
<accession>Q9CDP0</accession>